<feature type="chain" id="PRO_0000262404" description="N-succinylglutamate 5-semialdehyde dehydrogenase">
    <location>
        <begin position="1"/>
        <end position="489"/>
    </location>
</feature>
<feature type="active site" evidence="1">
    <location>
        <position position="246"/>
    </location>
</feature>
<feature type="active site" evidence="1">
    <location>
        <position position="280"/>
    </location>
</feature>
<feature type="binding site" evidence="1">
    <location>
        <begin position="223"/>
        <end position="228"/>
    </location>
    <ligand>
        <name>NAD(+)</name>
        <dbReference type="ChEBI" id="CHEBI:57540"/>
    </ligand>
</feature>
<organism>
    <name type="scientific">Idiomarina loihiensis (strain ATCC BAA-735 / DSM 15497 / L2-TR)</name>
    <dbReference type="NCBI Taxonomy" id="283942"/>
    <lineage>
        <taxon>Bacteria</taxon>
        <taxon>Pseudomonadati</taxon>
        <taxon>Pseudomonadota</taxon>
        <taxon>Gammaproteobacteria</taxon>
        <taxon>Alteromonadales</taxon>
        <taxon>Idiomarinaceae</taxon>
        <taxon>Idiomarina</taxon>
    </lineage>
</organism>
<dbReference type="EC" id="1.2.1.71" evidence="1"/>
<dbReference type="EMBL" id="AE017340">
    <property type="protein sequence ID" value="AAV83148.1"/>
    <property type="molecule type" value="Genomic_DNA"/>
</dbReference>
<dbReference type="RefSeq" id="WP_011235542.1">
    <property type="nucleotide sequence ID" value="NC_006512.1"/>
</dbReference>
<dbReference type="SMR" id="Q5QVX3"/>
<dbReference type="STRING" id="283942.IL2316"/>
<dbReference type="GeneID" id="41337512"/>
<dbReference type="KEGG" id="ilo:IL2316"/>
<dbReference type="eggNOG" id="COG1012">
    <property type="taxonomic scope" value="Bacteria"/>
</dbReference>
<dbReference type="HOGENOM" id="CLU_005391_1_0_6"/>
<dbReference type="OrthoDB" id="9812625at2"/>
<dbReference type="UniPathway" id="UPA00185">
    <property type="reaction ID" value="UER00282"/>
</dbReference>
<dbReference type="Proteomes" id="UP000001171">
    <property type="component" value="Chromosome"/>
</dbReference>
<dbReference type="GO" id="GO:0043824">
    <property type="term" value="F:succinylglutamate-semialdehyde dehydrogenase activity"/>
    <property type="evidence" value="ECO:0007669"/>
    <property type="project" value="UniProtKB-EC"/>
</dbReference>
<dbReference type="GO" id="GO:0019544">
    <property type="term" value="P:arginine catabolic process to glutamate"/>
    <property type="evidence" value="ECO:0007669"/>
    <property type="project" value="UniProtKB-UniRule"/>
</dbReference>
<dbReference type="GO" id="GO:0019545">
    <property type="term" value="P:arginine catabolic process to succinate"/>
    <property type="evidence" value="ECO:0007669"/>
    <property type="project" value="UniProtKB-UniRule"/>
</dbReference>
<dbReference type="CDD" id="cd07095">
    <property type="entry name" value="ALDH_SGSD_AstD"/>
    <property type="match status" value="1"/>
</dbReference>
<dbReference type="FunFam" id="3.40.605.10:FF:000010">
    <property type="entry name" value="N-succinylglutamate 5-semialdehyde dehydrogenase"/>
    <property type="match status" value="1"/>
</dbReference>
<dbReference type="Gene3D" id="3.40.605.10">
    <property type="entry name" value="Aldehyde Dehydrogenase, Chain A, domain 1"/>
    <property type="match status" value="1"/>
</dbReference>
<dbReference type="Gene3D" id="3.40.309.10">
    <property type="entry name" value="Aldehyde Dehydrogenase, Chain A, domain 2"/>
    <property type="match status" value="1"/>
</dbReference>
<dbReference type="HAMAP" id="MF_01174">
    <property type="entry name" value="Aldedh_AstD"/>
    <property type="match status" value="1"/>
</dbReference>
<dbReference type="InterPro" id="IPR016161">
    <property type="entry name" value="Ald_DH/histidinol_DH"/>
</dbReference>
<dbReference type="InterPro" id="IPR016163">
    <property type="entry name" value="Ald_DH_C"/>
</dbReference>
<dbReference type="InterPro" id="IPR016160">
    <property type="entry name" value="Ald_DH_CS_CYS"/>
</dbReference>
<dbReference type="InterPro" id="IPR029510">
    <property type="entry name" value="Ald_DH_CS_GLU"/>
</dbReference>
<dbReference type="InterPro" id="IPR016162">
    <property type="entry name" value="Ald_DH_N"/>
</dbReference>
<dbReference type="InterPro" id="IPR015590">
    <property type="entry name" value="Aldehyde_DH_dom"/>
</dbReference>
<dbReference type="InterPro" id="IPR017649">
    <property type="entry name" value="SuccinylGlu_semiald_DH_AstD"/>
</dbReference>
<dbReference type="NCBIfam" id="TIGR03240">
    <property type="entry name" value="arg_catab_astD"/>
    <property type="match status" value="1"/>
</dbReference>
<dbReference type="NCBIfam" id="NF006992">
    <property type="entry name" value="PRK09457.1"/>
    <property type="match status" value="1"/>
</dbReference>
<dbReference type="PANTHER" id="PTHR11699">
    <property type="entry name" value="ALDEHYDE DEHYDROGENASE-RELATED"/>
    <property type="match status" value="1"/>
</dbReference>
<dbReference type="Pfam" id="PF00171">
    <property type="entry name" value="Aldedh"/>
    <property type="match status" value="1"/>
</dbReference>
<dbReference type="SUPFAM" id="SSF53720">
    <property type="entry name" value="ALDH-like"/>
    <property type="match status" value="1"/>
</dbReference>
<dbReference type="PROSITE" id="PS00070">
    <property type="entry name" value="ALDEHYDE_DEHYDR_CYS"/>
    <property type="match status" value="1"/>
</dbReference>
<dbReference type="PROSITE" id="PS00687">
    <property type="entry name" value="ALDEHYDE_DEHYDR_GLU"/>
    <property type="match status" value="1"/>
</dbReference>
<evidence type="ECO:0000255" key="1">
    <source>
        <dbReference type="HAMAP-Rule" id="MF_01174"/>
    </source>
</evidence>
<sequence>MTNSIQFIDGCWEAGEGQLFKSIDPARNEVIWSGEAASETQVEKAILAARAAFPDWSGRSVEERLAICQKFSELLEENKEHLARTMAKETGKPVWETRTEVGAMMGKVAISERAYHERTGTVENDMPGAKAFIRHKPHGVVAVYGPYNFPGHLPNGHIVPALIAGNTVVFKPSELTPMVAQETVKLWEKAGIPAGVLNLVQGEVDTGKALSAHPQIDGLYFTGSSNTGHLLHKQFGGRPDKILALEMGGNNPLLVTNVADVDAAVHNIVQSAFITSGQRCTCARRLFIEDSEQGRAVLERLIEVTENILVDDYEADPQPFMGAMISAKAAGEMVDAQNELLHKGAKSLVRMKQTDSKKGFVTPGIVDVTGVEDLPDEEHFGPLLKVYRFKDIDAAIKEANNTRYGLSAGVLCDDEQTYRYFFKHIRAGIVNWNKPITGASSAAPFGGIGASGNHRASAYYAADYCAYPVASVEADSMSLPESLAPGLKF</sequence>
<gene>
    <name evidence="1" type="primary">astD</name>
    <name type="ordered locus">IL2316</name>
</gene>
<name>ASTD_IDILO</name>
<protein>
    <recommendedName>
        <fullName evidence="1">N-succinylglutamate 5-semialdehyde dehydrogenase</fullName>
        <ecNumber evidence="1">1.2.1.71</ecNumber>
    </recommendedName>
    <alternativeName>
        <fullName evidence="1">Succinylglutamic semialdehyde dehydrogenase</fullName>
        <shortName evidence="1">SGSD</shortName>
    </alternativeName>
</protein>
<comment type="function">
    <text evidence="1">Catalyzes the NAD-dependent reduction of succinylglutamate semialdehyde into succinylglutamate.</text>
</comment>
<comment type="catalytic activity">
    <reaction evidence="1">
        <text>N-succinyl-L-glutamate 5-semialdehyde + NAD(+) + H2O = N-succinyl-L-glutamate + NADH + 2 H(+)</text>
        <dbReference type="Rhea" id="RHEA:10812"/>
        <dbReference type="ChEBI" id="CHEBI:15377"/>
        <dbReference type="ChEBI" id="CHEBI:15378"/>
        <dbReference type="ChEBI" id="CHEBI:57540"/>
        <dbReference type="ChEBI" id="CHEBI:57945"/>
        <dbReference type="ChEBI" id="CHEBI:58520"/>
        <dbReference type="ChEBI" id="CHEBI:58763"/>
        <dbReference type="EC" id="1.2.1.71"/>
    </reaction>
</comment>
<comment type="pathway">
    <text evidence="1">Amino-acid degradation; L-arginine degradation via AST pathway; L-glutamate and succinate from L-arginine: step 4/5.</text>
</comment>
<comment type="similarity">
    <text evidence="1">Belongs to the aldehyde dehydrogenase family. AstD subfamily.</text>
</comment>
<reference key="1">
    <citation type="journal article" date="2004" name="Proc. Natl. Acad. Sci. U.S.A.">
        <title>Genome sequence of the deep-sea gamma-proteobacterium Idiomarina loihiensis reveals amino acid fermentation as a source of carbon and energy.</title>
        <authorList>
            <person name="Hou S."/>
            <person name="Saw J.H."/>
            <person name="Lee K.S."/>
            <person name="Freitas T.A."/>
            <person name="Belisle C."/>
            <person name="Kawarabayasi Y."/>
            <person name="Donachie S.P."/>
            <person name="Pikina A."/>
            <person name="Galperin M.Y."/>
            <person name="Koonin E.V."/>
            <person name="Makarova K.S."/>
            <person name="Omelchenko M.V."/>
            <person name="Sorokin A."/>
            <person name="Wolf Y.I."/>
            <person name="Li Q.X."/>
            <person name="Keum Y.S."/>
            <person name="Campbell S."/>
            <person name="Denery J."/>
            <person name="Aizawa S."/>
            <person name="Shibata S."/>
            <person name="Malahoff A."/>
            <person name="Alam M."/>
        </authorList>
    </citation>
    <scope>NUCLEOTIDE SEQUENCE [LARGE SCALE GENOMIC DNA]</scope>
    <source>
        <strain>ATCC BAA-735 / DSM 15497 / L2-TR</strain>
    </source>
</reference>
<proteinExistence type="inferred from homology"/>
<keyword id="KW-0056">Arginine metabolism</keyword>
<keyword id="KW-0520">NAD</keyword>
<keyword id="KW-0560">Oxidoreductase</keyword>
<keyword id="KW-1185">Reference proteome</keyword>
<accession>Q5QVX3</accession>